<evidence type="ECO:0000250" key="1">
    <source>
        <dbReference type="UniProtKB" id="P0DL65"/>
    </source>
</evidence>
<evidence type="ECO:0000269" key="2">
    <source>
    </source>
</evidence>
<evidence type="ECO:0000269" key="3">
    <source ref="2"/>
</evidence>
<evidence type="ECO:0000303" key="4">
    <source>
    </source>
</evidence>
<evidence type="ECO:0000305" key="5"/>
<evidence type="ECO:0000305" key="6">
    <source>
    </source>
</evidence>
<protein>
    <recommendedName>
        <fullName evidence="4">Potassium channel toxin alpha-KTx 19.2</fullName>
    </recommendedName>
    <alternativeName>
        <fullName evidence="4">Toxin Kbot21</fullName>
    </alternativeName>
</protein>
<name>KA192_BUTOC</name>
<proteinExistence type="evidence at protein level"/>
<accession>C0HJQ2</accession>
<reference evidence="5" key="1">
    <citation type="journal article" date="2015" name="PLoS ONE">
        <title>Characterization of Kbot21 Reveals Novel Side Chain Interactions of Scorpion Toxins Inhibiting Voltage-Gated Potassium Channels.</title>
        <authorList>
            <person name="ElFessi-Magouri R."/>
            <person name="Peigneur S."/>
            <person name="Othman H."/>
            <person name="Srairi-Abid N."/>
            <person name="ElAyeb M."/>
            <person name="Tytgat J."/>
            <person name="Kharrat R."/>
        </authorList>
    </citation>
    <scope>PROTEIN SEQUENCE</scope>
    <scope>FUNCTION</scope>
    <scope>SUBUNIT</scope>
    <scope>SUBCELLULAR LOCATION</scope>
    <scope>TOXIC DOSE</scope>
    <source>
        <tissue evidence="4">Venom</tissue>
    </source>
</reference>
<reference evidence="5" key="2">
    <citation type="submission" date="2014-12" db="UniProtKB">
        <authorList>
            <person name="ElFessi-Magouri R."/>
            <person name="Peigneur S."/>
            <person name="Othman H."/>
            <person name="Srairi-Abid N."/>
            <person name="ElAyeb M."/>
            <person name="Tytgat J."/>
            <person name="Kharrat R."/>
        </authorList>
    </citation>
    <scope>MASS SPECTROMETRY</scope>
</reference>
<feature type="peptide" id="PRO_0000440689" description="Potassium channel toxin alpha-KTx 19.2" evidence="2">
    <location>
        <begin position="1"/>
        <end position="31"/>
    </location>
</feature>
<feature type="site" description="Basic residue of the functional dyad" evidence="1">
    <location>
        <position position="21"/>
    </location>
</feature>
<feature type="site" description="Aromatic residue of the functional dyad" evidence="1">
    <location>
        <position position="30"/>
    </location>
</feature>
<feature type="disulfide bond" evidence="1">
    <location>
        <begin position="3"/>
        <end position="22"/>
    </location>
</feature>
<feature type="disulfide bond" evidence="1">
    <location>
        <begin position="8"/>
        <end position="27"/>
    </location>
</feature>
<feature type="disulfide bond" evidence="1">
    <location>
        <begin position="12"/>
        <end position="29"/>
    </location>
</feature>
<sequence length="31" mass="3400">AACYSSDCRVKCRAMGFSSGKCIDSKCKCYK</sequence>
<dbReference type="SMR" id="C0HJQ2"/>
<dbReference type="GO" id="GO:0005576">
    <property type="term" value="C:extracellular region"/>
    <property type="evidence" value="ECO:0000314"/>
    <property type="project" value="UniProtKB"/>
</dbReference>
<dbReference type="GO" id="GO:0019870">
    <property type="term" value="F:potassium channel inhibitor activity"/>
    <property type="evidence" value="ECO:0000314"/>
    <property type="project" value="UniProtKB"/>
</dbReference>
<dbReference type="GO" id="GO:0090729">
    <property type="term" value="F:toxin activity"/>
    <property type="evidence" value="ECO:0007669"/>
    <property type="project" value="UniProtKB-KW"/>
</dbReference>
<dbReference type="GO" id="GO:0044562">
    <property type="term" value="P:envenomation resulting in negative regulation of voltage-gated potassium channel activity in another organism"/>
    <property type="evidence" value="ECO:0000314"/>
    <property type="project" value="UniProtKB"/>
</dbReference>
<dbReference type="FunFam" id="3.30.30.10:FF:000019">
    <property type="match status" value="1"/>
</dbReference>
<dbReference type="Gene3D" id="3.30.30.10">
    <property type="entry name" value="Knottin, scorpion toxin-like"/>
    <property type="match status" value="1"/>
</dbReference>
<dbReference type="InterPro" id="IPR036574">
    <property type="entry name" value="Scorpion_toxin-like_sf"/>
</dbReference>
<dbReference type="InterPro" id="IPR001947">
    <property type="entry name" value="Scorpion_toxinS_K_inh"/>
</dbReference>
<dbReference type="Pfam" id="PF00451">
    <property type="entry name" value="Toxin_2"/>
    <property type="match status" value="1"/>
</dbReference>
<dbReference type="SUPFAM" id="SSF57095">
    <property type="entry name" value="Scorpion toxin-like"/>
    <property type="match status" value="1"/>
</dbReference>
<dbReference type="PROSITE" id="PS01138">
    <property type="entry name" value="SCORP_SHORT_TOXIN"/>
    <property type="match status" value="1"/>
</dbReference>
<organism evidence="4">
    <name type="scientific">Buthus occitanus tunetanus</name>
    <name type="common">Common European scorpion</name>
    <name type="synonym">Buthus tunetanus</name>
    <dbReference type="NCBI Taxonomy" id="6871"/>
    <lineage>
        <taxon>Eukaryota</taxon>
        <taxon>Metazoa</taxon>
        <taxon>Ecdysozoa</taxon>
        <taxon>Arthropoda</taxon>
        <taxon>Chelicerata</taxon>
        <taxon>Arachnida</taxon>
        <taxon>Scorpiones</taxon>
        <taxon>Buthida</taxon>
        <taxon>Buthoidea</taxon>
        <taxon>Buthidae</taxon>
        <taxon>Buthus</taxon>
    </lineage>
</organism>
<comment type="function">
    <text evidence="2">Blocks voltage-gated potassium channels rKv1.1/KCNA1, rKv1.2/KCNA2, hKv1.3/KCNA3, rKv1.6/KCNA6 (IC(50)=75.9 nM) and, to a lesser extent, Shaker IR (with the inactivation domain removed).</text>
</comment>
<comment type="subunit">
    <text evidence="2">Monomer.</text>
</comment>
<comment type="subcellular location">
    <subcellularLocation>
        <location evidence="2">Secreted</location>
    </subcellularLocation>
</comment>
<comment type="tissue specificity">
    <text evidence="6">Expressed by the venom gland.</text>
</comment>
<comment type="domain">
    <text evidence="5">Has the structural arrangement of an alpha-helix connected to antiparallel beta-sheets by disulfide bonds (CS-alpha/beta).</text>
</comment>
<comment type="mass spectrometry" mass="3383.0" error="0.17" method="MALDI" evidence="3"/>
<comment type="toxic dose">
    <text evidence="2">LD(50) is 1 ug/kg by intracerebro-ventricular injection in mice.</text>
</comment>
<comment type="miscellaneous">
    <text evidence="2">Negative results: does not block voltage-gated potassium channels rKv1.4/KCNA4 and rKv2.1/KCNB1.</text>
</comment>
<comment type="similarity">
    <text evidence="4">Belongs to the short scorpion toxin superfamily. Potassium channel inhibitor family. Alpha-KTx 19 subfamily.</text>
</comment>
<keyword id="KW-0903">Direct protein sequencing</keyword>
<keyword id="KW-1015">Disulfide bond</keyword>
<keyword id="KW-0872">Ion channel impairing toxin</keyword>
<keyword id="KW-0528">Neurotoxin</keyword>
<keyword id="KW-0632">Potassium channel impairing toxin</keyword>
<keyword id="KW-0964">Secreted</keyword>
<keyword id="KW-0800">Toxin</keyword>
<keyword id="KW-1220">Voltage-gated potassium channel impairing toxin</keyword>